<name>RLMI_KLEP7</name>
<proteinExistence type="inferred from homology"/>
<protein>
    <recommendedName>
        <fullName evidence="1">Ribosomal RNA large subunit methyltransferase I</fullName>
        <ecNumber evidence="1">2.1.1.191</ecNumber>
    </recommendedName>
    <alternativeName>
        <fullName evidence="1">23S rRNA m5C1962 methyltransferase</fullName>
    </alternativeName>
    <alternativeName>
        <fullName evidence="1">rRNA (cytosine-C(5)-)-methyltransferase RlmI</fullName>
    </alternativeName>
</protein>
<organism>
    <name type="scientific">Klebsiella pneumoniae subsp. pneumoniae (strain ATCC 700721 / MGH 78578)</name>
    <dbReference type="NCBI Taxonomy" id="272620"/>
    <lineage>
        <taxon>Bacteria</taxon>
        <taxon>Pseudomonadati</taxon>
        <taxon>Pseudomonadota</taxon>
        <taxon>Gammaproteobacteria</taxon>
        <taxon>Enterobacterales</taxon>
        <taxon>Enterobacteriaceae</taxon>
        <taxon>Klebsiella/Raoultella group</taxon>
        <taxon>Klebsiella</taxon>
        <taxon>Klebsiella pneumoniae complex</taxon>
    </lineage>
</organism>
<gene>
    <name evidence="1" type="primary">rlmI</name>
    <name type="ordered locus">KPN78578_09760</name>
    <name type="ORF">KPN_01001</name>
</gene>
<sequence length="400" mass="44659">MTDSLFPRLVLAKGREKSLLRRHPWIFSGGVARMEGKARSGETIDIVDHQGKWLARGAYSPSSQIRARVWTFDRNEAIDSAFFERRLQQAQTWRAWLAERDGLDSYRLIAGESDGLPGVTIDRFGNFFVLQLLSAGAEYQRAAIISALQNLFPDCAIYDRSDVAVRKKEGLELAQGPVVGELPPALLPITEHGMKLLVDIQGGHKTGYYLDQRDSRLATRRYVADKRVLNCFSYTGGFAVSALMGGCRQVTSVDTSQEALDVARQNVEINGLDLSKAEFVRDDVFKLLRKYRDQGEKFDVIVMDPPKFVENKSQLMGACRGYKDINMLAIQLLNPGGVLLTFSCSGLMTTDLFQKIIADAAIDAGRDVQFIEQFRQAADHPVIATYPEGLYLKGFACRVM</sequence>
<dbReference type="EC" id="2.1.1.191" evidence="1"/>
<dbReference type="EMBL" id="CP000647">
    <property type="protein sequence ID" value="ABR76437.1"/>
    <property type="status" value="ALT_INIT"/>
    <property type="molecule type" value="Genomic_DNA"/>
</dbReference>
<dbReference type="RefSeq" id="WP_004141630.1">
    <property type="nucleotide sequence ID" value="NC_009648.1"/>
</dbReference>
<dbReference type="SMR" id="A6T766"/>
<dbReference type="STRING" id="272620.KPN_01001"/>
<dbReference type="PaxDb" id="272620-KPN_01001"/>
<dbReference type="EnsemblBacteria" id="ABR76437">
    <property type="protein sequence ID" value="ABR76437"/>
    <property type="gene ID" value="KPN_01001"/>
</dbReference>
<dbReference type="KEGG" id="kpn:KPN_01001"/>
<dbReference type="HOGENOM" id="CLU_014042_0_0_6"/>
<dbReference type="Proteomes" id="UP000000265">
    <property type="component" value="Chromosome"/>
</dbReference>
<dbReference type="GO" id="GO:0005737">
    <property type="term" value="C:cytoplasm"/>
    <property type="evidence" value="ECO:0007669"/>
    <property type="project" value="UniProtKB-SubCell"/>
</dbReference>
<dbReference type="GO" id="GO:0003723">
    <property type="term" value="F:RNA binding"/>
    <property type="evidence" value="ECO:0007669"/>
    <property type="project" value="UniProtKB-KW"/>
</dbReference>
<dbReference type="GO" id="GO:0016434">
    <property type="term" value="F:rRNA (cytosine) methyltransferase activity"/>
    <property type="evidence" value="ECO:0007669"/>
    <property type="project" value="UniProtKB-UniRule"/>
</dbReference>
<dbReference type="CDD" id="cd02440">
    <property type="entry name" value="AdoMet_MTases"/>
    <property type="match status" value="1"/>
</dbReference>
<dbReference type="CDD" id="cd21153">
    <property type="entry name" value="PUA_RlmI"/>
    <property type="match status" value="1"/>
</dbReference>
<dbReference type="CDD" id="cd11572">
    <property type="entry name" value="RlmI_M_like"/>
    <property type="match status" value="1"/>
</dbReference>
<dbReference type="FunFam" id="3.40.50.150:FF:000044">
    <property type="entry name" value="Ribosomal RNA large subunit methyltransferase I"/>
    <property type="match status" value="1"/>
</dbReference>
<dbReference type="Gene3D" id="2.30.130.10">
    <property type="entry name" value="PUA domain"/>
    <property type="match status" value="1"/>
</dbReference>
<dbReference type="Gene3D" id="3.30.750.80">
    <property type="entry name" value="RNA methyltransferase domain (HRMD) like"/>
    <property type="match status" value="1"/>
</dbReference>
<dbReference type="Gene3D" id="3.40.50.150">
    <property type="entry name" value="Vaccinia Virus protein VP39"/>
    <property type="match status" value="1"/>
</dbReference>
<dbReference type="HAMAP" id="MF_01857">
    <property type="entry name" value="23SrRNA_methyltr_I"/>
    <property type="match status" value="1"/>
</dbReference>
<dbReference type="InterPro" id="IPR002478">
    <property type="entry name" value="PUA"/>
</dbReference>
<dbReference type="InterPro" id="IPR015947">
    <property type="entry name" value="PUA-like_sf"/>
</dbReference>
<dbReference type="InterPro" id="IPR036974">
    <property type="entry name" value="PUA_sf"/>
</dbReference>
<dbReference type="InterPro" id="IPR023542">
    <property type="entry name" value="RLMI"/>
</dbReference>
<dbReference type="InterPro" id="IPR041532">
    <property type="entry name" value="RlmI-like_PUA"/>
</dbReference>
<dbReference type="InterPro" id="IPR019614">
    <property type="entry name" value="SAM-dep_methyl-trfase"/>
</dbReference>
<dbReference type="InterPro" id="IPR029063">
    <property type="entry name" value="SAM-dependent_MTases_sf"/>
</dbReference>
<dbReference type="NCBIfam" id="NF011707">
    <property type="entry name" value="PRK15128.1"/>
    <property type="match status" value="1"/>
</dbReference>
<dbReference type="PANTHER" id="PTHR42873">
    <property type="entry name" value="RIBOSOMAL RNA LARGE SUBUNIT METHYLTRANSFERASE"/>
    <property type="match status" value="1"/>
</dbReference>
<dbReference type="PANTHER" id="PTHR42873:SF1">
    <property type="entry name" value="S-ADENOSYLMETHIONINE-DEPENDENT METHYLTRANSFERASE DOMAIN-CONTAINING PROTEIN"/>
    <property type="match status" value="1"/>
</dbReference>
<dbReference type="Pfam" id="PF10672">
    <property type="entry name" value="Methyltrans_SAM"/>
    <property type="match status" value="1"/>
</dbReference>
<dbReference type="Pfam" id="PF17785">
    <property type="entry name" value="PUA_3"/>
    <property type="match status" value="1"/>
</dbReference>
<dbReference type="SMART" id="SM00359">
    <property type="entry name" value="PUA"/>
    <property type="match status" value="1"/>
</dbReference>
<dbReference type="SUPFAM" id="SSF88697">
    <property type="entry name" value="PUA domain-like"/>
    <property type="match status" value="1"/>
</dbReference>
<dbReference type="SUPFAM" id="SSF53335">
    <property type="entry name" value="S-adenosyl-L-methionine-dependent methyltransferases"/>
    <property type="match status" value="1"/>
</dbReference>
<dbReference type="PROSITE" id="PS50890">
    <property type="entry name" value="PUA"/>
    <property type="match status" value="1"/>
</dbReference>
<keyword id="KW-0963">Cytoplasm</keyword>
<keyword id="KW-0489">Methyltransferase</keyword>
<keyword id="KW-0694">RNA-binding</keyword>
<keyword id="KW-0698">rRNA processing</keyword>
<keyword id="KW-0949">S-adenosyl-L-methionine</keyword>
<keyword id="KW-0808">Transferase</keyword>
<comment type="function">
    <text evidence="1">Specifically methylates the cytosine at position 1962 (m5C1962) of 23S rRNA.</text>
</comment>
<comment type="catalytic activity">
    <reaction evidence="1">
        <text>cytidine(1962) in 23S rRNA + S-adenosyl-L-methionine = 5-methylcytidine(1962) in 23S rRNA + S-adenosyl-L-homocysteine + H(+)</text>
        <dbReference type="Rhea" id="RHEA:42912"/>
        <dbReference type="Rhea" id="RHEA-COMP:10382"/>
        <dbReference type="Rhea" id="RHEA-COMP:10386"/>
        <dbReference type="ChEBI" id="CHEBI:15378"/>
        <dbReference type="ChEBI" id="CHEBI:57856"/>
        <dbReference type="ChEBI" id="CHEBI:59789"/>
        <dbReference type="ChEBI" id="CHEBI:74483"/>
        <dbReference type="ChEBI" id="CHEBI:82748"/>
        <dbReference type="EC" id="2.1.1.191"/>
    </reaction>
</comment>
<comment type="subcellular location">
    <subcellularLocation>
        <location evidence="1">Cytoplasm</location>
    </subcellularLocation>
</comment>
<comment type="similarity">
    <text evidence="1">Belongs to the methyltransferase superfamily. RlmI family.</text>
</comment>
<comment type="sequence caution" evidence="2">
    <conflict type="erroneous initiation">
        <sequence resource="EMBL-CDS" id="ABR76437"/>
    </conflict>
</comment>
<accession>A6T766</accession>
<feature type="chain" id="PRO_0000366235" description="Ribosomal RNA large subunit methyltransferase I">
    <location>
        <begin position="1"/>
        <end position="400"/>
    </location>
</feature>
<feature type="domain" description="PUA" evidence="1">
    <location>
        <begin position="6"/>
        <end position="84"/>
    </location>
</feature>
<evidence type="ECO:0000255" key="1">
    <source>
        <dbReference type="HAMAP-Rule" id="MF_01857"/>
    </source>
</evidence>
<evidence type="ECO:0000305" key="2"/>
<reference key="1">
    <citation type="submission" date="2006-09" db="EMBL/GenBank/DDBJ databases">
        <authorList>
            <consortium name="The Klebsiella pneumonia Genome Sequencing Project"/>
            <person name="McClelland M."/>
            <person name="Sanderson E.K."/>
            <person name="Spieth J."/>
            <person name="Clifton W.S."/>
            <person name="Latreille P."/>
            <person name="Sabo A."/>
            <person name="Pepin K."/>
            <person name="Bhonagiri V."/>
            <person name="Porwollik S."/>
            <person name="Ali J."/>
            <person name="Wilson R.K."/>
        </authorList>
    </citation>
    <scope>NUCLEOTIDE SEQUENCE [LARGE SCALE GENOMIC DNA]</scope>
    <source>
        <strain>ATCC 700721 / MGH 78578</strain>
    </source>
</reference>